<sequence length="605" mass="69189">MIDKLGDFKRDYFCGELTENNIGDEVRLLGWADSVRDHGGVIFINLRDKEGIIQVVIDPSKSPKEAYEKAKKVRSEYVLAVRGRVQRRPAGTENPKLPTGTIEIAVDELRILNTCDILPFPIEDGISAHEEVRLRYRFLDIRRPEMMKKLILRHEVYQATREYLAGHGFLEVETPMLTKSTPEGARDFLVPARLEKGKFYALPQSPQLFKQILMVSGIDRYFQIVKCFRDEDLRKDRQPEFTQIDFEMSFVDEEDVITVSEGLIHYIFKKVLGIELKLPFKRMSYTEAIERYGTDKPDLRYSLELKDITDIAKDVQFKVFKDTVEKGGIVKGINVKGGSKFSRKEIDDLTEEAKKYGAKGMAWIKINEDGSLQSPIVKFFTEEQINKIKEIMEGENGDLLIFIADSYEITHRVLGFLRKHLAEKLKLIPENVWEFVWVVDFPLVEWDEEEGRLVALHHPFTSPKEEDIDRLDEAIQDKKVALSFRSRAYDLVLNGEEIGGGSIRIHSSHIQKKVFELLGISDEEAEEKFGFLINALKYGAPPHGGLAFGLDRIVALMTGSESIRDVIAFPKTQKGICPLTDAPDFVQEDQLEELGIEVNIPEETV</sequence>
<accession>C0QT74</accession>
<proteinExistence type="inferred from homology"/>
<feature type="chain" id="PRO_1000199002" description="Aspartate--tRNA(Asp/Asn) ligase">
    <location>
        <begin position="1"/>
        <end position="605"/>
    </location>
</feature>
<feature type="region of interest" description="Aspartate" evidence="1">
    <location>
        <begin position="207"/>
        <end position="210"/>
    </location>
</feature>
<feature type="binding site" evidence="1">
    <location>
        <position position="183"/>
    </location>
    <ligand>
        <name>L-aspartate</name>
        <dbReference type="ChEBI" id="CHEBI:29991"/>
    </ligand>
</feature>
<feature type="binding site" evidence="1">
    <location>
        <begin position="229"/>
        <end position="231"/>
    </location>
    <ligand>
        <name>ATP</name>
        <dbReference type="ChEBI" id="CHEBI:30616"/>
    </ligand>
</feature>
<feature type="binding site" evidence="1">
    <location>
        <position position="229"/>
    </location>
    <ligand>
        <name>L-aspartate</name>
        <dbReference type="ChEBI" id="CHEBI:29991"/>
    </ligand>
</feature>
<feature type="binding site" evidence="1">
    <location>
        <position position="238"/>
    </location>
    <ligand>
        <name>ATP</name>
        <dbReference type="ChEBI" id="CHEBI:30616"/>
    </ligand>
</feature>
<feature type="binding site" evidence="1">
    <location>
        <position position="457"/>
    </location>
    <ligand>
        <name>L-aspartate</name>
        <dbReference type="ChEBI" id="CHEBI:29991"/>
    </ligand>
</feature>
<feature type="binding site" evidence="1">
    <location>
        <position position="497"/>
    </location>
    <ligand>
        <name>ATP</name>
        <dbReference type="ChEBI" id="CHEBI:30616"/>
    </ligand>
</feature>
<feature type="binding site" evidence="1">
    <location>
        <position position="504"/>
    </location>
    <ligand>
        <name>L-aspartate</name>
        <dbReference type="ChEBI" id="CHEBI:29991"/>
    </ligand>
</feature>
<feature type="binding site" evidence="1">
    <location>
        <begin position="549"/>
        <end position="552"/>
    </location>
    <ligand>
        <name>ATP</name>
        <dbReference type="ChEBI" id="CHEBI:30616"/>
    </ligand>
</feature>
<feature type="site" description="Important for tRNA non-discrimination" evidence="1">
    <location>
        <position position="38"/>
    </location>
</feature>
<feature type="site" description="Important for tRNA non-discrimination" evidence="1">
    <location>
        <position position="91"/>
    </location>
</feature>
<gene>
    <name evidence="1" type="primary">aspS</name>
    <name type="ordered locus">PERMA_0091</name>
</gene>
<name>SYDND_PERMH</name>
<reference key="1">
    <citation type="journal article" date="2009" name="J. Bacteriol.">
        <title>Complete and draft genome sequences of six members of the Aquificales.</title>
        <authorList>
            <person name="Reysenbach A.-L."/>
            <person name="Hamamura N."/>
            <person name="Podar M."/>
            <person name="Griffiths E."/>
            <person name="Ferreira S."/>
            <person name="Hochstein R."/>
            <person name="Heidelberg J."/>
            <person name="Johnson J."/>
            <person name="Mead D."/>
            <person name="Pohorille A."/>
            <person name="Sarmiento M."/>
            <person name="Schweighofer K."/>
            <person name="Seshadri R."/>
            <person name="Voytek M.A."/>
        </authorList>
    </citation>
    <scope>NUCLEOTIDE SEQUENCE [LARGE SCALE GENOMIC DNA]</scope>
    <source>
        <strain>DSM 14350 / EX-H1</strain>
    </source>
</reference>
<dbReference type="EC" id="6.1.1.23" evidence="1"/>
<dbReference type="EMBL" id="CP001230">
    <property type="protein sequence ID" value="ACO03484.1"/>
    <property type="molecule type" value="Genomic_DNA"/>
</dbReference>
<dbReference type="RefSeq" id="WP_012675723.1">
    <property type="nucleotide sequence ID" value="NC_012440.1"/>
</dbReference>
<dbReference type="SMR" id="C0QT74"/>
<dbReference type="STRING" id="123214.PERMA_0091"/>
<dbReference type="PaxDb" id="123214-PERMA_0091"/>
<dbReference type="KEGG" id="pmx:PERMA_0091"/>
<dbReference type="eggNOG" id="COG0173">
    <property type="taxonomic scope" value="Bacteria"/>
</dbReference>
<dbReference type="HOGENOM" id="CLU_014330_3_2_0"/>
<dbReference type="OrthoDB" id="9802326at2"/>
<dbReference type="Proteomes" id="UP000001366">
    <property type="component" value="Chromosome"/>
</dbReference>
<dbReference type="GO" id="GO:0005737">
    <property type="term" value="C:cytoplasm"/>
    <property type="evidence" value="ECO:0007669"/>
    <property type="project" value="UniProtKB-SubCell"/>
</dbReference>
<dbReference type="GO" id="GO:0004815">
    <property type="term" value="F:aspartate-tRNA ligase activity"/>
    <property type="evidence" value="ECO:0007669"/>
    <property type="project" value="UniProtKB-UniRule"/>
</dbReference>
<dbReference type="GO" id="GO:0050560">
    <property type="term" value="F:aspartate-tRNA(Asn) ligase activity"/>
    <property type="evidence" value="ECO:0007669"/>
    <property type="project" value="UniProtKB-EC"/>
</dbReference>
<dbReference type="GO" id="GO:0005524">
    <property type="term" value="F:ATP binding"/>
    <property type="evidence" value="ECO:0007669"/>
    <property type="project" value="UniProtKB-UniRule"/>
</dbReference>
<dbReference type="GO" id="GO:0003676">
    <property type="term" value="F:nucleic acid binding"/>
    <property type="evidence" value="ECO:0007669"/>
    <property type="project" value="InterPro"/>
</dbReference>
<dbReference type="GO" id="GO:0006422">
    <property type="term" value="P:aspartyl-tRNA aminoacylation"/>
    <property type="evidence" value="ECO:0007669"/>
    <property type="project" value="UniProtKB-UniRule"/>
</dbReference>
<dbReference type="CDD" id="cd00777">
    <property type="entry name" value="AspRS_core"/>
    <property type="match status" value="1"/>
</dbReference>
<dbReference type="CDD" id="cd04317">
    <property type="entry name" value="EcAspRS_like_N"/>
    <property type="match status" value="1"/>
</dbReference>
<dbReference type="Gene3D" id="3.30.930.10">
    <property type="entry name" value="Bira Bifunctional Protein, Domain 2"/>
    <property type="match status" value="1"/>
</dbReference>
<dbReference type="Gene3D" id="3.30.1360.30">
    <property type="entry name" value="GAD-like domain"/>
    <property type="match status" value="1"/>
</dbReference>
<dbReference type="Gene3D" id="2.40.50.140">
    <property type="entry name" value="Nucleic acid-binding proteins"/>
    <property type="match status" value="1"/>
</dbReference>
<dbReference type="HAMAP" id="MF_00044">
    <property type="entry name" value="Asp_tRNA_synth_type1"/>
    <property type="match status" value="1"/>
</dbReference>
<dbReference type="InterPro" id="IPR004364">
    <property type="entry name" value="Aa-tRNA-synt_II"/>
</dbReference>
<dbReference type="InterPro" id="IPR006195">
    <property type="entry name" value="aa-tRNA-synth_II"/>
</dbReference>
<dbReference type="InterPro" id="IPR045864">
    <property type="entry name" value="aa-tRNA-synth_II/BPL/LPL"/>
</dbReference>
<dbReference type="InterPro" id="IPR004524">
    <property type="entry name" value="Asp-tRNA-ligase_1"/>
</dbReference>
<dbReference type="InterPro" id="IPR047089">
    <property type="entry name" value="Asp-tRNA-ligase_1_N"/>
</dbReference>
<dbReference type="InterPro" id="IPR002312">
    <property type="entry name" value="Asp/Asn-tRNA-synth_IIb"/>
</dbReference>
<dbReference type="InterPro" id="IPR047090">
    <property type="entry name" value="AspRS_core"/>
</dbReference>
<dbReference type="InterPro" id="IPR004115">
    <property type="entry name" value="GAD-like_sf"/>
</dbReference>
<dbReference type="InterPro" id="IPR029351">
    <property type="entry name" value="GAD_dom"/>
</dbReference>
<dbReference type="InterPro" id="IPR012340">
    <property type="entry name" value="NA-bd_OB-fold"/>
</dbReference>
<dbReference type="InterPro" id="IPR004365">
    <property type="entry name" value="NA-bd_OB_tRNA"/>
</dbReference>
<dbReference type="NCBIfam" id="TIGR00459">
    <property type="entry name" value="aspS_bact"/>
    <property type="match status" value="1"/>
</dbReference>
<dbReference type="NCBIfam" id="NF001750">
    <property type="entry name" value="PRK00476.1"/>
    <property type="match status" value="1"/>
</dbReference>
<dbReference type="PANTHER" id="PTHR22594:SF5">
    <property type="entry name" value="ASPARTATE--TRNA LIGASE, MITOCHONDRIAL"/>
    <property type="match status" value="1"/>
</dbReference>
<dbReference type="PANTHER" id="PTHR22594">
    <property type="entry name" value="ASPARTYL/LYSYL-TRNA SYNTHETASE"/>
    <property type="match status" value="1"/>
</dbReference>
<dbReference type="Pfam" id="PF02938">
    <property type="entry name" value="GAD"/>
    <property type="match status" value="1"/>
</dbReference>
<dbReference type="Pfam" id="PF00152">
    <property type="entry name" value="tRNA-synt_2"/>
    <property type="match status" value="1"/>
</dbReference>
<dbReference type="Pfam" id="PF01336">
    <property type="entry name" value="tRNA_anti-codon"/>
    <property type="match status" value="1"/>
</dbReference>
<dbReference type="PRINTS" id="PR01042">
    <property type="entry name" value="TRNASYNTHASP"/>
</dbReference>
<dbReference type="SUPFAM" id="SSF55681">
    <property type="entry name" value="Class II aaRS and biotin synthetases"/>
    <property type="match status" value="1"/>
</dbReference>
<dbReference type="SUPFAM" id="SSF55261">
    <property type="entry name" value="GAD domain-like"/>
    <property type="match status" value="1"/>
</dbReference>
<dbReference type="SUPFAM" id="SSF50249">
    <property type="entry name" value="Nucleic acid-binding proteins"/>
    <property type="match status" value="1"/>
</dbReference>
<dbReference type="PROSITE" id="PS50862">
    <property type="entry name" value="AA_TRNA_LIGASE_II"/>
    <property type="match status" value="1"/>
</dbReference>
<comment type="function">
    <text evidence="1">Aspartyl-tRNA synthetase with relaxed tRNA specificity since it is able to aspartylate not only its cognate tRNA(Asp) but also tRNA(Asn). Reaction proceeds in two steps: L-aspartate is first activated by ATP to form Asp-AMP and then transferred to the acceptor end of tRNA(Asp/Asn).</text>
</comment>
<comment type="catalytic activity">
    <reaction evidence="1">
        <text>tRNA(Asx) + L-aspartate + ATP = L-aspartyl-tRNA(Asx) + AMP + diphosphate</text>
        <dbReference type="Rhea" id="RHEA:18349"/>
        <dbReference type="Rhea" id="RHEA-COMP:9710"/>
        <dbReference type="Rhea" id="RHEA-COMP:9711"/>
        <dbReference type="ChEBI" id="CHEBI:29991"/>
        <dbReference type="ChEBI" id="CHEBI:30616"/>
        <dbReference type="ChEBI" id="CHEBI:33019"/>
        <dbReference type="ChEBI" id="CHEBI:78442"/>
        <dbReference type="ChEBI" id="CHEBI:78516"/>
        <dbReference type="ChEBI" id="CHEBI:456215"/>
        <dbReference type="EC" id="6.1.1.23"/>
    </reaction>
</comment>
<comment type="subunit">
    <text evidence="1">Homodimer.</text>
</comment>
<comment type="subcellular location">
    <subcellularLocation>
        <location evidence="1">Cytoplasm</location>
    </subcellularLocation>
</comment>
<comment type="similarity">
    <text evidence="1">Belongs to the class-II aminoacyl-tRNA synthetase family. Type 1 subfamily.</text>
</comment>
<evidence type="ECO:0000255" key="1">
    <source>
        <dbReference type="HAMAP-Rule" id="MF_00044"/>
    </source>
</evidence>
<organism>
    <name type="scientific">Persephonella marina (strain DSM 14350 / EX-H1)</name>
    <dbReference type="NCBI Taxonomy" id="123214"/>
    <lineage>
        <taxon>Bacteria</taxon>
        <taxon>Pseudomonadati</taxon>
        <taxon>Aquificota</taxon>
        <taxon>Aquificia</taxon>
        <taxon>Aquificales</taxon>
        <taxon>Hydrogenothermaceae</taxon>
        <taxon>Persephonella</taxon>
    </lineage>
</organism>
<keyword id="KW-0030">Aminoacyl-tRNA synthetase</keyword>
<keyword id="KW-0067">ATP-binding</keyword>
<keyword id="KW-0963">Cytoplasm</keyword>
<keyword id="KW-0436">Ligase</keyword>
<keyword id="KW-0547">Nucleotide-binding</keyword>
<keyword id="KW-0648">Protein biosynthesis</keyword>
<keyword id="KW-1185">Reference proteome</keyword>
<protein>
    <recommendedName>
        <fullName evidence="1">Aspartate--tRNA(Asp/Asn) ligase</fullName>
        <ecNumber evidence="1">6.1.1.23</ecNumber>
    </recommendedName>
    <alternativeName>
        <fullName evidence="1">Aspartyl-tRNA synthetase</fullName>
        <shortName evidence="1">AspRS</shortName>
    </alternativeName>
    <alternativeName>
        <fullName evidence="1">Non-discriminating aspartyl-tRNA synthetase</fullName>
        <shortName evidence="1">ND-AspRS</shortName>
    </alternativeName>
</protein>